<keyword id="KW-0175">Coiled coil</keyword>
<keyword id="KW-1017">Isopeptide bond</keyword>
<keyword id="KW-1185">Reference proteome</keyword>
<keyword id="KW-0833">Ubl conjugation pathway</keyword>
<organism>
    <name type="scientific">Nocardia farcinica (strain IFM 10152)</name>
    <dbReference type="NCBI Taxonomy" id="247156"/>
    <lineage>
        <taxon>Bacteria</taxon>
        <taxon>Bacillati</taxon>
        <taxon>Actinomycetota</taxon>
        <taxon>Actinomycetes</taxon>
        <taxon>Mycobacteriales</taxon>
        <taxon>Nocardiaceae</taxon>
        <taxon>Nocardia</taxon>
    </lineage>
</organism>
<accession>Q5YUX1</accession>
<evidence type="ECO:0000255" key="1">
    <source>
        <dbReference type="HAMAP-Rule" id="MF_02106"/>
    </source>
</evidence>
<evidence type="ECO:0000256" key="2">
    <source>
        <dbReference type="SAM" id="MobiDB-lite"/>
    </source>
</evidence>
<name>PUP_NOCFA</name>
<reference key="1">
    <citation type="journal article" date="2004" name="Proc. Natl. Acad. Sci. U.S.A.">
        <title>The complete genomic sequence of Nocardia farcinica IFM 10152.</title>
        <authorList>
            <person name="Ishikawa J."/>
            <person name="Yamashita A."/>
            <person name="Mikami Y."/>
            <person name="Hoshino Y."/>
            <person name="Kurita H."/>
            <person name="Hotta K."/>
            <person name="Shiba T."/>
            <person name="Hattori M."/>
        </authorList>
    </citation>
    <scope>NUCLEOTIDE SEQUENCE [LARGE SCALE GENOMIC DNA]</scope>
    <source>
        <strain>IFM 10152</strain>
    </source>
</reference>
<sequence>MAQEQTKRTGGGDEDEGSAGPEAAGQERREKLAEDTDDLLDEIDDVLEENAEDFVRAYVQKGGQ</sequence>
<comment type="function">
    <text evidence="1">Protein modifier that is covalently attached to lysine residues of substrate proteins, thereby targeting them for proteasomal degradation. The tagging system is termed pupylation.</text>
</comment>
<comment type="pathway">
    <text evidence="1">Protein degradation; proteasomal Pup-dependent pathway.</text>
</comment>
<comment type="subunit">
    <text evidence="1">Strongly interacts with the proteasome-associated ATPase ARC through a hydrophobic interface; the interacting region of Pup lies in its C-terminal half. There is one Pup binding site per ARC hexamer ring.</text>
</comment>
<comment type="domain">
    <text evidence="1">The N-terminal unstructured half of Pup provides a signal required to initiate unfolding and degradation by the proteasome but is not needed for pupylation, while the C-terminal helical half of Pup interacts with ARC to target proteins to the proteasome.</text>
</comment>
<comment type="PTM">
    <text evidence="1">Is modified by deamidation of its C-terminal glutamine to glutamate by the deamidase Dop, a prerequisite to the subsequent pupylation process.</text>
</comment>
<comment type="similarity">
    <text evidence="1">Belongs to the prokaryotic ubiquitin-like protein family.</text>
</comment>
<proteinExistence type="inferred from homology"/>
<feature type="chain" id="PRO_0000390601" description="Prokaryotic ubiquitin-like protein Pup">
    <location>
        <begin position="1"/>
        <end position="64"/>
    </location>
</feature>
<feature type="region of interest" description="Disordered" evidence="2">
    <location>
        <begin position="1"/>
        <end position="38"/>
    </location>
</feature>
<feature type="region of interest" description="ARC ATPase binding" evidence="1">
    <location>
        <begin position="21"/>
        <end position="58"/>
    </location>
</feature>
<feature type="coiled-coil region" evidence="1">
    <location>
        <begin position="24"/>
        <end position="52"/>
    </location>
</feature>
<feature type="compositionally biased region" description="Basic and acidic residues" evidence="2">
    <location>
        <begin position="1"/>
        <end position="11"/>
    </location>
</feature>
<feature type="compositionally biased region" description="Basic and acidic residues" evidence="2">
    <location>
        <begin position="25"/>
        <end position="34"/>
    </location>
</feature>
<feature type="modified residue" description="Deamidated glutamine" evidence="1">
    <location>
        <position position="64"/>
    </location>
</feature>
<feature type="cross-link" description="Isoglutamyl lysine isopeptide (Gln-Lys) (interchain with K-? in acceptor proteins)" evidence="1">
    <location>
        <position position="64"/>
    </location>
</feature>
<gene>
    <name evidence="1" type="primary">pup</name>
    <name type="ordered locus">NFA_31730</name>
</gene>
<dbReference type="EMBL" id="AP006618">
    <property type="protein sequence ID" value="BAD58020.1"/>
    <property type="molecule type" value="Genomic_DNA"/>
</dbReference>
<dbReference type="RefSeq" id="WP_011209705.1">
    <property type="nucleotide sequence ID" value="NC_006361.1"/>
</dbReference>
<dbReference type="SMR" id="Q5YUX1"/>
<dbReference type="STRING" id="247156.NFA_31730"/>
<dbReference type="GeneID" id="61133888"/>
<dbReference type="KEGG" id="nfa:NFA_31730"/>
<dbReference type="eggNOG" id="ENOG50333JS">
    <property type="taxonomic scope" value="Bacteria"/>
</dbReference>
<dbReference type="HOGENOM" id="CLU_183816_1_0_11"/>
<dbReference type="UniPathway" id="UPA00997"/>
<dbReference type="Proteomes" id="UP000006820">
    <property type="component" value="Chromosome"/>
</dbReference>
<dbReference type="GO" id="GO:0070628">
    <property type="term" value="F:proteasome binding"/>
    <property type="evidence" value="ECO:0007669"/>
    <property type="project" value="UniProtKB-UniRule"/>
</dbReference>
<dbReference type="GO" id="GO:0031386">
    <property type="term" value="F:protein tag activity"/>
    <property type="evidence" value="ECO:0007669"/>
    <property type="project" value="UniProtKB-UniRule"/>
</dbReference>
<dbReference type="GO" id="GO:0019941">
    <property type="term" value="P:modification-dependent protein catabolic process"/>
    <property type="evidence" value="ECO:0007669"/>
    <property type="project" value="UniProtKB-UniRule"/>
</dbReference>
<dbReference type="GO" id="GO:0010498">
    <property type="term" value="P:proteasomal protein catabolic process"/>
    <property type="evidence" value="ECO:0007669"/>
    <property type="project" value="UniProtKB-UniRule"/>
</dbReference>
<dbReference type="GO" id="GO:0070490">
    <property type="term" value="P:protein pupylation"/>
    <property type="evidence" value="ECO:0007669"/>
    <property type="project" value="UniProtKB-UniRule"/>
</dbReference>
<dbReference type="HAMAP" id="MF_02106">
    <property type="entry name" value="Pup"/>
    <property type="match status" value="1"/>
</dbReference>
<dbReference type="InterPro" id="IPR008515">
    <property type="entry name" value="Ubiquitin-like_Pup"/>
</dbReference>
<dbReference type="NCBIfam" id="TIGR03687">
    <property type="entry name" value="pupylate_cterm"/>
    <property type="match status" value="1"/>
</dbReference>
<dbReference type="Pfam" id="PF05639">
    <property type="entry name" value="Pup"/>
    <property type="match status" value="1"/>
</dbReference>
<protein>
    <recommendedName>
        <fullName evidence="1">Prokaryotic ubiquitin-like protein Pup</fullName>
    </recommendedName>
    <alternativeName>
        <fullName evidence="1">Bacterial ubiquitin-like modifier</fullName>
    </alternativeName>
</protein>